<name>RNPS1_RAT</name>
<protein>
    <recommendedName>
        <fullName>RNA-binding protein with serine-rich domain 1</fullName>
    </recommendedName>
</protein>
<feature type="chain" id="PRO_0000081820" description="RNA-binding protein with serine-rich domain 1">
    <location>
        <begin position="1"/>
        <end position="305"/>
    </location>
</feature>
<feature type="domain" description="RRM" evidence="3">
    <location>
        <begin position="161"/>
        <end position="240"/>
    </location>
</feature>
<feature type="region of interest" description="Necessary for interaction with the cleaved p110 isoform of CDC2L1" evidence="1">
    <location>
        <begin position="1"/>
        <end position="220"/>
    </location>
</feature>
<feature type="region of interest" description="Disordered" evidence="4">
    <location>
        <begin position="1"/>
        <end position="170"/>
    </location>
</feature>
<feature type="region of interest" description="Necessary for interaction with SRP54, nuclear localization and exon-skipping" evidence="1">
    <location>
        <begin position="1"/>
        <end position="161"/>
    </location>
</feature>
<feature type="region of interest" description="Necessary for interactions with UPF2 and UPF3B and UPF2-dependent NMD" evidence="1">
    <location>
        <begin position="69"/>
        <end position="121"/>
    </location>
</feature>
<feature type="region of interest" description="Necessary for interaction with PNN and exon-skipping" evidence="1">
    <location>
        <begin position="156"/>
        <end position="242"/>
    </location>
</feature>
<feature type="region of interest" description="Interaction with SAP18 and ACIN1" evidence="1">
    <location>
        <begin position="159"/>
        <end position="244"/>
    </location>
</feature>
<feature type="region of interest" description="Necessary for interaction with TRA2B, nuclear localization and exon-skipping" evidence="1">
    <location>
        <begin position="238"/>
        <end position="305"/>
    </location>
</feature>
<feature type="region of interest" description="Disordered" evidence="4">
    <location>
        <begin position="240"/>
        <end position="305"/>
    </location>
</feature>
<feature type="compositionally biased region" description="Basic residues" evidence="4">
    <location>
        <begin position="1"/>
        <end position="10"/>
    </location>
</feature>
<feature type="compositionally biased region" description="Basic and acidic residues" evidence="4">
    <location>
        <begin position="33"/>
        <end position="59"/>
    </location>
</feature>
<feature type="compositionally biased region" description="Low complexity" evidence="4">
    <location>
        <begin position="68"/>
        <end position="126"/>
    </location>
</feature>
<feature type="compositionally biased region" description="Basic residues" evidence="4">
    <location>
        <begin position="127"/>
        <end position="143"/>
    </location>
</feature>
<feature type="compositionally biased region" description="Basic residues" evidence="4">
    <location>
        <begin position="151"/>
        <end position="167"/>
    </location>
</feature>
<feature type="compositionally biased region" description="Pro residues" evidence="4">
    <location>
        <begin position="242"/>
        <end position="262"/>
    </location>
</feature>
<feature type="compositionally biased region" description="Basic residues" evidence="4">
    <location>
        <begin position="266"/>
        <end position="298"/>
    </location>
</feature>
<feature type="modified residue" description="Phosphoserine" evidence="2">
    <location>
        <position position="53"/>
    </location>
</feature>
<feature type="modified residue" description="Phosphoserine" evidence="2">
    <location>
        <position position="155"/>
    </location>
</feature>
<feature type="modified residue" description="Phosphoserine" evidence="2">
    <location>
        <position position="157"/>
    </location>
</feature>
<feature type="modified residue" description="Phosphothreonine" evidence="2">
    <location>
        <position position="161"/>
    </location>
</feature>
<feature type="modified residue" description="N6-acetyllysine" evidence="2">
    <location>
        <position position="218"/>
    </location>
</feature>
<feature type="cross-link" description="Glycyl lysine isopeptide (Lys-Gly) (interchain with G-Cter in SUMO2)" evidence="2">
    <location>
        <position position="7"/>
    </location>
</feature>
<feature type="cross-link" description="Glycyl lysine isopeptide (Lys-Gly) (interchain with G-Cter in SUMO2)" evidence="2">
    <location>
        <position position="15"/>
    </location>
</feature>
<dbReference type="EMBL" id="BC079014">
    <property type="protein sequence ID" value="AAH79014.1"/>
    <property type="molecule type" value="mRNA"/>
</dbReference>
<dbReference type="RefSeq" id="NP_001011890.1">
    <property type="nucleotide sequence ID" value="NM_001011890.1"/>
</dbReference>
<dbReference type="RefSeq" id="XP_006245993.1">
    <property type="nucleotide sequence ID" value="XM_006245931.3"/>
</dbReference>
<dbReference type="RefSeq" id="XP_006245994.1">
    <property type="nucleotide sequence ID" value="XM_006245932.3"/>
</dbReference>
<dbReference type="SMR" id="Q6AYK1"/>
<dbReference type="FunCoup" id="Q6AYK1">
    <property type="interactions" value="3421"/>
</dbReference>
<dbReference type="IntAct" id="Q6AYK1">
    <property type="interactions" value="4"/>
</dbReference>
<dbReference type="STRING" id="10116.ENSRNOP00000047771"/>
<dbReference type="iPTMnet" id="Q6AYK1"/>
<dbReference type="PhosphoSitePlus" id="Q6AYK1"/>
<dbReference type="jPOST" id="Q6AYK1"/>
<dbReference type="PaxDb" id="10116-ENSRNOP00000047771"/>
<dbReference type="Ensembl" id="ENSRNOT00000105026.1">
    <property type="protein sequence ID" value="ENSRNOP00000089572.1"/>
    <property type="gene ID" value="ENSRNOG00000008703.7"/>
</dbReference>
<dbReference type="GeneID" id="287113"/>
<dbReference type="KEGG" id="rno:287113"/>
<dbReference type="UCSC" id="RGD:1307522">
    <property type="organism name" value="rat"/>
</dbReference>
<dbReference type="AGR" id="RGD:1307522"/>
<dbReference type="CTD" id="10921"/>
<dbReference type="RGD" id="1307522">
    <property type="gene designation" value="Rnps1"/>
</dbReference>
<dbReference type="eggNOG" id="KOG4209">
    <property type="taxonomic scope" value="Eukaryota"/>
</dbReference>
<dbReference type="GeneTree" id="ENSGT00730000111029"/>
<dbReference type="HOGENOM" id="CLU_076438_0_0_1"/>
<dbReference type="InParanoid" id="Q6AYK1"/>
<dbReference type="OMA" id="EFPVDRY"/>
<dbReference type="OrthoDB" id="252020at2759"/>
<dbReference type="Reactome" id="R-RNO-159236">
    <property type="pathway name" value="Transport of Mature mRNA derived from an Intron-Containing Transcript"/>
</dbReference>
<dbReference type="Reactome" id="R-RNO-72163">
    <property type="pathway name" value="mRNA Splicing - Major Pathway"/>
</dbReference>
<dbReference type="Reactome" id="R-RNO-72187">
    <property type="pathway name" value="mRNA 3'-end processing"/>
</dbReference>
<dbReference type="Reactome" id="R-RNO-73856">
    <property type="pathway name" value="RNA Polymerase II Transcription Termination"/>
</dbReference>
<dbReference type="Reactome" id="R-RNO-975957">
    <property type="pathway name" value="Nonsense Mediated Decay (NMD) enhanced by the Exon Junction Complex (EJC)"/>
</dbReference>
<dbReference type="PRO" id="PR:Q6AYK1"/>
<dbReference type="Proteomes" id="UP000002494">
    <property type="component" value="Chromosome 10"/>
</dbReference>
<dbReference type="Bgee" id="ENSRNOG00000008703">
    <property type="expression patterns" value="Expressed in thymus and 20 other cell types or tissues"/>
</dbReference>
<dbReference type="GO" id="GO:0061574">
    <property type="term" value="C:ASAP complex"/>
    <property type="evidence" value="ECO:0000250"/>
    <property type="project" value="UniProtKB"/>
</dbReference>
<dbReference type="GO" id="GO:0005737">
    <property type="term" value="C:cytoplasm"/>
    <property type="evidence" value="ECO:0000266"/>
    <property type="project" value="RGD"/>
</dbReference>
<dbReference type="GO" id="GO:0016607">
    <property type="term" value="C:nuclear speck"/>
    <property type="evidence" value="ECO:0007669"/>
    <property type="project" value="UniProtKB-SubCell"/>
</dbReference>
<dbReference type="GO" id="GO:0005654">
    <property type="term" value="C:nucleoplasm"/>
    <property type="evidence" value="ECO:0000318"/>
    <property type="project" value="GO_Central"/>
</dbReference>
<dbReference type="GO" id="GO:0005634">
    <property type="term" value="C:nucleus"/>
    <property type="evidence" value="ECO:0000266"/>
    <property type="project" value="RGD"/>
</dbReference>
<dbReference type="GO" id="GO:0003730">
    <property type="term" value="F:mRNA 3'-UTR binding"/>
    <property type="evidence" value="ECO:0000266"/>
    <property type="project" value="RGD"/>
</dbReference>
<dbReference type="GO" id="GO:0000398">
    <property type="term" value="P:mRNA splicing, via spliceosome"/>
    <property type="evidence" value="ECO:0000318"/>
    <property type="project" value="GO_Central"/>
</dbReference>
<dbReference type="GO" id="GO:0048025">
    <property type="term" value="P:negative regulation of mRNA splicing, via spliceosome"/>
    <property type="evidence" value="ECO:0000250"/>
    <property type="project" value="UniProtKB"/>
</dbReference>
<dbReference type="GO" id="GO:0000184">
    <property type="term" value="P:nuclear-transcribed mRNA catabolic process, nonsense-mediated decay"/>
    <property type="evidence" value="ECO:0000266"/>
    <property type="project" value="RGD"/>
</dbReference>
<dbReference type="GO" id="GO:0043065">
    <property type="term" value="P:positive regulation of apoptotic process"/>
    <property type="evidence" value="ECO:0000250"/>
    <property type="project" value="UniProtKB"/>
</dbReference>
<dbReference type="GO" id="GO:0000381">
    <property type="term" value="P:regulation of alternative mRNA splicing, via spliceosome"/>
    <property type="evidence" value="ECO:0000250"/>
    <property type="project" value="UniProtKB"/>
</dbReference>
<dbReference type="CDD" id="cd12365">
    <property type="entry name" value="RRM_RNPS1"/>
    <property type="match status" value="1"/>
</dbReference>
<dbReference type="Gene3D" id="3.30.70.330">
    <property type="match status" value="1"/>
</dbReference>
<dbReference type="InterPro" id="IPR012677">
    <property type="entry name" value="Nucleotide-bd_a/b_plait_sf"/>
</dbReference>
<dbReference type="InterPro" id="IPR035979">
    <property type="entry name" value="RBD_domain_sf"/>
</dbReference>
<dbReference type="InterPro" id="IPR034201">
    <property type="entry name" value="RNPS1_RRM"/>
</dbReference>
<dbReference type="InterPro" id="IPR000504">
    <property type="entry name" value="RRM_dom"/>
</dbReference>
<dbReference type="PANTHER" id="PTHR15481">
    <property type="entry name" value="RIBONUCLEIC ACID BINDING PROTEIN S1"/>
    <property type="match status" value="1"/>
</dbReference>
<dbReference type="PANTHER" id="PTHR15481:SF2">
    <property type="entry name" value="RNA-BINDING PROTEIN WITH SERINE-RICH DOMAIN 1"/>
    <property type="match status" value="1"/>
</dbReference>
<dbReference type="Pfam" id="PF00076">
    <property type="entry name" value="RRM_1"/>
    <property type="match status" value="1"/>
</dbReference>
<dbReference type="SMART" id="SM00360">
    <property type="entry name" value="RRM"/>
    <property type="match status" value="1"/>
</dbReference>
<dbReference type="SUPFAM" id="SSF54928">
    <property type="entry name" value="RNA-binding domain, RBD"/>
    <property type="match status" value="1"/>
</dbReference>
<dbReference type="PROSITE" id="PS50102">
    <property type="entry name" value="RRM"/>
    <property type="match status" value="1"/>
</dbReference>
<accession>Q6AYK1</accession>
<reference key="1">
    <citation type="journal article" date="2004" name="Genome Res.">
        <title>The status, quality, and expansion of the NIH full-length cDNA project: the Mammalian Gene Collection (MGC).</title>
        <authorList>
            <consortium name="The MGC Project Team"/>
        </authorList>
    </citation>
    <scope>NUCLEOTIDE SEQUENCE [LARGE SCALE MRNA]</scope>
    <source>
        <tissue>Testis</tissue>
    </source>
</reference>
<proteinExistence type="evidence at transcript level"/>
<sequence>MDLSGVKKKSLLGVKENNKKSSTRAPSPTKRKDRSDEKSKDRSKDKGTTKESSEKDRGRDKTRKRRSASSGSSSTRSRSSSTSSSGSSTSTGSSSGSSSSSASSRSGSSSTSRSSSSSSSSGSPSPSRRRHDNRRRSRSKSKPPKRDEKERKRRSPSPKPTKVHIGRLTRNVTKDHIMEIFSTYGKIKMIDMPVERMHPHLSKGYAYVEFENPDEAEKALKHMDGGQIDGQEITATAVLAPWPRPPPRRFSPPRRMLPPPPMWRRSPPRMRRRSRSPRRRSPVRRRSRSPGRRRHRSRSSSNSSR</sequence>
<evidence type="ECO:0000250" key="1"/>
<evidence type="ECO:0000250" key="2">
    <source>
        <dbReference type="UniProtKB" id="Q15287"/>
    </source>
</evidence>
<evidence type="ECO:0000255" key="3">
    <source>
        <dbReference type="PROSITE-ProRule" id="PRU00176"/>
    </source>
</evidence>
<evidence type="ECO:0000256" key="4">
    <source>
        <dbReference type="SAM" id="MobiDB-lite"/>
    </source>
</evidence>
<evidence type="ECO:0000305" key="5"/>
<organism>
    <name type="scientific">Rattus norvegicus</name>
    <name type="common">Rat</name>
    <dbReference type="NCBI Taxonomy" id="10116"/>
    <lineage>
        <taxon>Eukaryota</taxon>
        <taxon>Metazoa</taxon>
        <taxon>Chordata</taxon>
        <taxon>Craniata</taxon>
        <taxon>Vertebrata</taxon>
        <taxon>Euteleostomi</taxon>
        <taxon>Mammalia</taxon>
        <taxon>Eutheria</taxon>
        <taxon>Euarchontoglires</taxon>
        <taxon>Glires</taxon>
        <taxon>Rodentia</taxon>
        <taxon>Myomorpha</taxon>
        <taxon>Muroidea</taxon>
        <taxon>Muridae</taxon>
        <taxon>Murinae</taxon>
        <taxon>Rattus</taxon>
    </lineage>
</organism>
<comment type="function">
    <text evidence="1">Part of pre- and post-splicing multiprotein mRNP complexes. Auxiliary component of the splicing-dependent multiprotein exon junction complex (EJC) deposited at splice junction on mRNAs. The EJC is a dynamic structure consisting of core proteins and several peripheral nuclear and cytoplasmic associated factors that join the complex only transiently either during EJC assembly or during subsequent mRNA metabolism. Component of the ASAP and PSAP complexes which bind RNA in a sequence-independent manner and are proposed to be recruited to the EJC prior to or during the splicing process and to regulate specific excision of introns in specific transcription subsets. The ASAP complex can inhibit RNA processing during in vitro splicing reactions. The ASAP complex promotes apoptosis and is disassembled after induction of apoptosis. Enhances the formation of the ATP-dependent A complex of the spliceosome. Involved in both constitutive splicing and, in association with SRP54 and TRA2B/SFRS10, in distinctive modulation of alternative splicing in a substrate-dependent manner. Involved in the splicing modulation of BCL2L1/Bcl-X (and probably other apoptotic genes); specifically inhibits formation of proapoptotic isoforms such as Bcl-X(S); the activity is different from the established EJC assembly and function. Participates in mRNA 3'-end cleavage. Involved in UPF2-dependent nonsense-mediated decay (NMD) of mRNAs containing premature stop codons. Also mediates increase of mRNA abundance and translational efficiency. Binds spliced mRNA 20-25 nt upstream of exon-exon junctions (By similarity).</text>
</comment>
<comment type="subunit">
    <text evidence="1">Found in mRNA splicing-dependent exon junction complexes (EJC). Found in a post-splicing complex with NXF1, RBM8A, UPF1, UPF2, UPF3A, UPF3B and RNPS1. Component of the heterotrimeric ASAP (apoptosis- and splicing-associated protein) and PSAP complexes consisting of RNPS1, SAP18 and either ACIN1 or PNN, respectively; the ASAP and PSAP complexes probably are formed mutually exclusive. Component of the active spliceosome. Associates with polysomes. Interacts with the cleaved p110 isoform of CDC2L1, CSNK2A1, PNN, SART3, SRP54, SRRM1 and TRA2B/SFRS10 (By similarity).</text>
</comment>
<comment type="subcellular location">
    <subcellularLocation>
        <location evidence="1">Nucleus</location>
    </subcellularLocation>
    <subcellularLocation>
        <location evidence="1">Nucleus speckle</location>
    </subcellularLocation>
    <subcellularLocation>
        <location evidence="1">Cytoplasm</location>
    </subcellularLocation>
    <text evidence="1">Nucleocytoplasmic shuttling protein. Colocalizes with the core EJC, ALYREF/THOC4, NXF1 and UAP56 in the nucleus and nuclear speckles (By similarity).</text>
</comment>
<comment type="domain">
    <text evidence="1">The RRM domain is required for the formation of the ASAP complex.</text>
</comment>
<comment type="PTM">
    <text evidence="1">Phosphorylated on one or more of the four Ser/Thr residues (Ser-43, Thr-49, Ser-52 or Ser-53). Ser-53 phosphorylation site is important for splicing and translation stimulation activity in vitro (By similarity).</text>
</comment>
<comment type="similarity">
    <text evidence="5">Belongs to the splicing factor SR family.</text>
</comment>
<keyword id="KW-0007">Acetylation</keyword>
<keyword id="KW-0963">Cytoplasm</keyword>
<keyword id="KW-1017">Isopeptide bond</keyword>
<keyword id="KW-0507">mRNA processing</keyword>
<keyword id="KW-0508">mRNA splicing</keyword>
<keyword id="KW-0866">Nonsense-mediated mRNA decay</keyword>
<keyword id="KW-0539">Nucleus</keyword>
<keyword id="KW-0597">Phosphoprotein</keyword>
<keyword id="KW-1185">Reference proteome</keyword>
<keyword id="KW-0694">RNA-binding</keyword>
<keyword id="KW-0832">Ubl conjugation</keyword>
<gene>
    <name type="primary">Rnps1</name>
</gene>